<evidence type="ECO:0000255" key="1"/>
<evidence type="ECO:0000305" key="2"/>
<proteinExistence type="inferred from homology"/>
<organism>
    <name type="scientific">Rhizobium meliloti</name>
    <name type="common">Ensifer meliloti</name>
    <name type="synonym">Sinorhizobium meliloti</name>
    <dbReference type="NCBI Taxonomy" id="382"/>
    <lineage>
        <taxon>Bacteria</taxon>
        <taxon>Pseudomonadati</taxon>
        <taxon>Pseudomonadota</taxon>
        <taxon>Alphaproteobacteria</taxon>
        <taxon>Hyphomicrobiales</taxon>
        <taxon>Rhizobiaceae</taxon>
        <taxon>Sinorhizobium/Ensifer group</taxon>
        <taxon>Sinorhizobium</taxon>
    </lineage>
</organism>
<feature type="signal peptide" evidence="1">
    <location>
        <begin position="1"/>
        <end position="20"/>
    </location>
</feature>
<feature type="chain" id="PRO_0000031730" description="Putative rhizopine-binding protein">
    <location>
        <begin position="21"/>
        <end position="309"/>
    </location>
</feature>
<accession>P49308</accession>
<gene>
    <name type="primary">mocB</name>
</gene>
<name>MOCB_RHIML</name>
<keyword id="KW-0574">Periplasm</keyword>
<keyword id="KW-0732">Signal</keyword>
<keyword id="KW-0813">Transport</keyword>
<sequence length="309" mass="32758">MKKFIIGIAAAVLVSTAAHAETIGASMAVFDDKFGTLLRNGMEDYAKTLDGVDLQIEDALNDVAKQQSQIQNFIAAGVDAIIVQPVDTDATTVMSKLAADAGIPLVYVNREPVNIDTLPEKQAFVASNEVDSGTLQTREICKLLDGKGKAVVIMGELSNQAARMRTKDIHDVLATDQCKGIEIVQEQTANWQRTQGADLMTNWLSAGIEFDAVIANNDEMAIGAIQALKAAGRSMDSVVIGGIDATDDALAAMAAGELDVSVFQDAVGQGKGSIDAALKLSKGEAVERKIYIPFELVTKANLAEFQGKN</sequence>
<comment type="function">
    <text>Involved in rhizopine (L-3-O-methyl-scyllo-inosamine) catabolism. Could be involved in its high affinity transport.</text>
</comment>
<comment type="subcellular location">
    <subcellularLocation>
        <location evidence="2">Periplasm</location>
    </subcellularLocation>
</comment>
<comment type="similarity">
    <text evidence="2">Belongs to the bacterial solute-binding protein 2 family.</text>
</comment>
<reference key="1">
    <citation type="journal article" date="1994" name="Mol. Gen. Genet.">
        <title>Molecular and genetic characterization of the rhizopine catabolism (mocABRC) genes of Rhizobium meliloti L5-30.</title>
        <authorList>
            <person name="Rossbach S."/>
            <person name="Kulpa D.A."/>
            <person name="Rossbach U."/>
            <person name="de Bruijn F.J."/>
        </authorList>
    </citation>
    <scope>NUCLEOTIDE SEQUENCE [GENOMIC DNA]</scope>
    <source>
        <strain>L5-30</strain>
    </source>
</reference>
<protein>
    <recommendedName>
        <fullName>Putative rhizopine-binding protein</fullName>
    </recommendedName>
</protein>
<dbReference type="EMBL" id="X78503">
    <property type="protein sequence ID" value="CAA55270.1"/>
    <property type="molecule type" value="Genomic_DNA"/>
</dbReference>
<dbReference type="PIR" id="S51573">
    <property type="entry name" value="S51573"/>
</dbReference>
<dbReference type="RefSeq" id="WP_046066541.1">
    <property type="nucleotide sequence ID" value="NZ_CP021827.1"/>
</dbReference>
<dbReference type="SMR" id="P49308"/>
<dbReference type="PATRIC" id="fig|382.53.peg.1555"/>
<dbReference type="GO" id="GO:0042597">
    <property type="term" value="C:periplasmic space"/>
    <property type="evidence" value="ECO:0007669"/>
    <property type="project" value="UniProtKB-SubCell"/>
</dbReference>
<dbReference type="GO" id="GO:0030246">
    <property type="term" value="F:carbohydrate binding"/>
    <property type="evidence" value="ECO:0007669"/>
    <property type="project" value="UniProtKB-ARBA"/>
</dbReference>
<dbReference type="CDD" id="cd06301">
    <property type="entry name" value="PBP1_rhizopine_binding-like"/>
    <property type="match status" value="1"/>
</dbReference>
<dbReference type="Gene3D" id="3.40.50.2300">
    <property type="match status" value="2"/>
</dbReference>
<dbReference type="InterPro" id="IPR028082">
    <property type="entry name" value="Peripla_BP_I"/>
</dbReference>
<dbReference type="InterPro" id="IPR025997">
    <property type="entry name" value="SBP_2_dom"/>
</dbReference>
<dbReference type="PANTHER" id="PTHR46847">
    <property type="entry name" value="D-ALLOSE-BINDING PERIPLASMIC PROTEIN-RELATED"/>
    <property type="match status" value="1"/>
</dbReference>
<dbReference type="PANTHER" id="PTHR46847:SF1">
    <property type="entry name" value="D-ALLOSE-BINDING PERIPLASMIC PROTEIN-RELATED"/>
    <property type="match status" value="1"/>
</dbReference>
<dbReference type="Pfam" id="PF13407">
    <property type="entry name" value="Peripla_BP_4"/>
    <property type="match status" value="1"/>
</dbReference>
<dbReference type="SUPFAM" id="SSF53822">
    <property type="entry name" value="Periplasmic binding protein-like I"/>
    <property type="match status" value="1"/>
</dbReference>